<reference key="1">
    <citation type="journal article" date="1995" name="DNA Res.">
        <title>Sequence analysis of the genome of the unicellular cyanobacterium Synechocystis sp. strain PCC6803. I. Sequence features in the 1 Mb region from map positions 64% to 92% of the genome.</title>
        <authorList>
            <person name="Kaneko T."/>
            <person name="Tanaka A."/>
            <person name="Sato S."/>
            <person name="Kotani H."/>
            <person name="Sazuka T."/>
            <person name="Miyajima N."/>
            <person name="Sugiura M."/>
            <person name="Tabata S."/>
        </authorList>
    </citation>
    <scope>NUCLEOTIDE SEQUENCE [LARGE SCALE GENOMIC DNA]</scope>
    <source>
        <strain>ATCC 27184 / PCC 6803 / N-1</strain>
    </source>
</reference>
<reference key="2">
    <citation type="journal article" date="1996" name="DNA Res.">
        <title>Sequence analysis of the genome of the unicellular cyanobacterium Synechocystis sp. strain PCC6803. II. Sequence determination of the entire genome and assignment of potential protein-coding regions.</title>
        <authorList>
            <person name="Kaneko T."/>
            <person name="Sato S."/>
            <person name="Kotani H."/>
            <person name="Tanaka A."/>
            <person name="Asamizu E."/>
            <person name="Nakamura Y."/>
            <person name="Miyajima N."/>
            <person name="Hirosawa M."/>
            <person name="Sugiura M."/>
            <person name="Sasamoto S."/>
            <person name="Kimura T."/>
            <person name="Hosouchi T."/>
            <person name="Matsuno A."/>
            <person name="Muraki A."/>
            <person name="Nakazaki N."/>
            <person name="Naruo K."/>
            <person name="Okumura S."/>
            <person name="Shimpo S."/>
            <person name="Takeuchi C."/>
            <person name="Wada T."/>
            <person name="Watanabe A."/>
            <person name="Yamada M."/>
            <person name="Yasuda M."/>
            <person name="Tabata S."/>
        </authorList>
    </citation>
    <scope>NUCLEOTIDE SEQUENCE [LARGE SCALE GENOMIC DNA]</scope>
    <source>
        <strain>ATCC 27184 / PCC 6803 / Kazusa</strain>
    </source>
</reference>
<keyword id="KW-0067">ATP-binding</keyword>
<keyword id="KW-0997">Cell inner membrane</keyword>
<keyword id="KW-1003">Cell membrane</keyword>
<keyword id="KW-0472">Membrane</keyword>
<keyword id="KW-0547">Nucleotide-binding</keyword>
<keyword id="KW-0592">Phosphate transport</keyword>
<keyword id="KW-1185">Reference proteome</keyword>
<keyword id="KW-1278">Translocase</keyword>
<keyword id="KW-0813">Transport</keyword>
<organism>
    <name type="scientific">Synechocystis sp. (strain ATCC 27184 / PCC 6803 / Kazusa)</name>
    <dbReference type="NCBI Taxonomy" id="1111708"/>
    <lineage>
        <taxon>Bacteria</taxon>
        <taxon>Bacillati</taxon>
        <taxon>Cyanobacteriota</taxon>
        <taxon>Cyanophyceae</taxon>
        <taxon>Synechococcales</taxon>
        <taxon>Merismopediaceae</taxon>
        <taxon>Synechocystis</taxon>
    </lineage>
</organism>
<comment type="function">
    <text evidence="1">Part of the ABC transporter complex PstSACB involved in phosphate import. Responsible for energy coupling to the transport system.</text>
</comment>
<comment type="catalytic activity">
    <reaction evidence="1">
        <text>phosphate(out) + ATP + H2O = ADP + 2 phosphate(in) + H(+)</text>
        <dbReference type="Rhea" id="RHEA:24440"/>
        <dbReference type="ChEBI" id="CHEBI:15377"/>
        <dbReference type="ChEBI" id="CHEBI:15378"/>
        <dbReference type="ChEBI" id="CHEBI:30616"/>
        <dbReference type="ChEBI" id="CHEBI:43474"/>
        <dbReference type="ChEBI" id="CHEBI:456216"/>
        <dbReference type="EC" id="7.3.2.1"/>
    </reaction>
</comment>
<comment type="subunit">
    <text evidence="1">The complex is composed of two ATP-binding proteins (PstB), two transmembrane proteins (PstC and PstA) and a solute-binding protein (PstS).</text>
</comment>
<comment type="subcellular location">
    <subcellularLocation>
        <location evidence="1">Cell inner membrane</location>
        <topology evidence="1">Peripheral membrane protein</topology>
    </subcellularLocation>
</comment>
<comment type="similarity">
    <text evidence="1">Belongs to the ABC transporter superfamily. Phosphate importer (TC 3.A.1.7) family.</text>
</comment>
<gene>
    <name evidence="1" type="primary">pstB1</name>
    <name type="ordered locus">sll0683</name>
</gene>
<sequence length="269" mass="30210">MNESPAQPLTETIPVFTTQNLDIYYGSHRAVRDVSLTIPKNKITAFIGPSGCGKSTILRCFNRLNDLIESFRLEGKVLYHSQDLYSPNIDVTAVRKYIGMVFQKPNPFPKTIFDNVVYGARVNGYKGNLEELAEDSLRRAALWDEVKDKLKASGFSLSGGQQQRLCIARAIAMQPEVLLMDEPCSALDPISTLKVEELMNELKENYTIIIVTHNMQQATRVADYTAFYNAEATDKGNKVGYLVEFDRTGKVFGDPQEQETKDYVSGRFG</sequence>
<dbReference type="EC" id="7.3.2.1" evidence="1"/>
<dbReference type="EMBL" id="BA000022">
    <property type="protein sequence ID" value="BAA10338.1"/>
    <property type="molecule type" value="Genomic_DNA"/>
</dbReference>
<dbReference type="PIR" id="S74420">
    <property type="entry name" value="S74420"/>
</dbReference>
<dbReference type="SMR" id="Q55196"/>
<dbReference type="FunCoup" id="Q55196">
    <property type="interactions" value="200"/>
</dbReference>
<dbReference type="STRING" id="1148.gene:10499838"/>
<dbReference type="PaxDb" id="1148-1001194"/>
<dbReference type="EnsemblBacteria" id="BAA10338">
    <property type="protein sequence ID" value="BAA10338"/>
    <property type="gene ID" value="BAA10338"/>
</dbReference>
<dbReference type="KEGG" id="syn:sll0683"/>
<dbReference type="eggNOG" id="COG1117">
    <property type="taxonomic scope" value="Bacteria"/>
</dbReference>
<dbReference type="InParanoid" id="Q55196"/>
<dbReference type="PhylomeDB" id="Q55196"/>
<dbReference type="Proteomes" id="UP000001425">
    <property type="component" value="Chromosome"/>
</dbReference>
<dbReference type="GO" id="GO:0005886">
    <property type="term" value="C:plasma membrane"/>
    <property type="evidence" value="ECO:0007669"/>
    <property type="project" value="UniProtKB-SubCell"/>
</dbReference>
<dbReference type="GO" id="GO:0005524">
    <property type="term" value="F:ATP binding"/>
    <property type="evidence" value="ECO:0007669"/>
    <property type="project" value="UniProtKB-KW"/>
</dbReference>
<dbReference type="GO" id="GO:0016887">
    <property type="term" value="F:ATP hydrolysis activity"/>
    <property type="evidence" value="ECO:0007669"/>
    <property type="project" value="InterPro"/>
</dbReference>
<dbReference type="GO" id="GO:0015415">
    <property type="term" value="F:ATPase-coupled phosphate ion transmembrane transporter activity"/>
    <property type="evidence" value="ECO:0007669"/>
    <property type="project" value="UniProtKB-EC"/>
</dbReference>
<dbReference type="GO" id="GO:0035435">
    <property type="term" value="P:phosphate ion transmembrane transport"/>
    <property type="evidence" value="ECO:0007669"/>
    <property type="project" value="InterPro"/>
</dbReference>
<dbReference type="CDD" id="cd03260">
    <property type="entry name" value="ABC_PstB_phosphate_transporter"/>
    <property type="match status" value="1"/>
</dbReference>
<dbReference type="Gene3D" id="3.40.50.300">
    <property type="entry name" value="P-loop containing nucleotide triphosphate hydrolases"/>
    <property type="match status" value="1"/>
</dbReference>
<dbReference type="InterPro" id="IPR003593">
    <property type="entry name" value="AAA+_ATPase"/>
</dbReference>
<dbReference type="InterPro" id="IPR003439">
    <property type="entry name" value="ABC_transporter-like_ATP-bd"/>
</dbReference>
<dbReference type="InterPro" id="IPR017871">
    <property type="entry name" value="ABC_transporter-like_CS"/>
</dbReference>
<dbReference type="InterPro" id="IPR027417">
    <property type="entry name" value="P-loop_NTPase"/>
</dbReference>
<dbReference type="InterPro" id="IPR005670">
    <property type="entry name" value="PstB-like"/>
</dbReference>
<dbReference type="NCBIfam" id="TIGR00972">
    <property type="entry name" value="3a0107s01c2"/>
    <property type="match status" value="1"/>
</dbReference>
<dbReference type="PANTHER" id="PTHR43423">
    <property type="entry name" value="ABC TRANSPORTER I FAMILY MEMBER 17"/>
    <property type="match status" value="1"/>
</dbReference>
<dbReference type="PANTHER" id="PTHR43423:SF1">
    <property type="entry name" value="ABC TRANSPORTER I FAMILY MEMBER 17"/>
    <property type="match status" value="1"/>
</dbReference>
<dbReference type="Pfam" id="PF00005">
    <property type="entry name" value="ABC_tran"/>
    <property type="match status" value="1"/>
</dbReference>
<dbReference type="SMART" id="SM00382">
    <property type="entry name" value="AAA"/>
    <property type="match status" value="1"/>
</dbReference>
<dbReference type="SUPFAM" id="SSF52540">
    <property type="entry name" value="P-loop containing nucleoside triphosphate hydrolases"/>
    <property type="match status" value="1"/>
</dbReference>
<dbReference type="PROSITE" id="PS00211">
    <property type="entry name" value="ABC_TRANSPORTER_1"/>
    <property type="match status" value="1"/>
</dbReference>
<dbReference type="PROSITE" id="PS50893">
    <property type="entry name" value="ABC_TRANSPORTER_2"/>
    <property type="match status" value="1"/>
</dbReference>
<dbReference type="PROSITE" id="PS51238">
    <property type="entry name" value="PSTB"/>
    <property type="match status" value="1"/>
</dbReference>
<proteinExistence type="inferred from homology"/>
<accession>Q55196</accession>
<evidence type="ECO:0000255" key="1">
    <source>
        <dbReference type="HAMAP-Rule" id="MF_01702"/>
    </source>
</evidence>
<protein>
    <recommendedName>
        <fullName evidence="1">Phosphate import ATP-binding protein PstB 1</fullName>
        <ecNumber evidence="1">7.3.2.1</ecNumber>
    </recommendedName>
    <alternativeName>
        <fullName evidence="1">ABC phosphate transporter 1</fullName>
    </alternativeName>
    <alternativeName>
        <fullName evidence="1">Phosphate-transporting ATPase 1</fullName>
    </alternativeName>
</protein>
<feature type="chain" id="PRO_0000092915" description="Phosphate import ATP-binding protein PstB 1">
    <location>
        <begin position="1"/>
        <end position="269"/>
    </location>
</feature>
<feature type="domain" description="ABC transporter" evidence="1">
    <location>
        <begin position="16"/>
        <end position="255"/>
    </location>
</feature>
<feature type="binding site" evidence="1">
    <location>
        <begin position="48"/>
        <end position="55"/>
    </location>
    <ligand>
        <name>ATP</name>
        <dbReference type="ChEBI" id="CHEBI:30616"/>
    </ligand>
</feature>
<name>PSTB1_SYNY3</name>